<reference key="1">
    <citation type="journal article" date="1996" name="Appl. Microbiol. Biotechnol.">
        <title>Molecular cloning, purification and characterization of two endo-1,4-beta-glucanases from Aspergillus oryzae KBN616.</title>
        <authorList>
            <person name="Kitamoto N."/>
            <person name="Go M."/>
            <person name="Shibayama T."/>
            <person name="Kimura T."/>
            <person name="Kito Y."/>
            <person name="Ohmiya K."/>
            <person name="Tsukagoshi N."/>
        </authorList>
    </citation>
    <scope>NUCLEOTIDE SEQUENCE [GENOMIC DNA]</scope>
    <scope>FUNCTION</scope>
    <scope>BIOPHYSICOCHEMICAL PROPERTIES</scope>
    <source>
        <strain>KBN616</strain>
    </source>
</reference>
<reference key="2">
    <citation type="journal article" date="2005" name="Nature">
        <title>Genome sequencing and analysis of Aspergillus oryzae.</title>
        <authorList>
            <person name="Machida M."/>
            <person name="Asai K."/>
            <person name="Sano M."/>
            <person name="Tanaka T."/>
            <person name="Kumagai T."/>
            <person name="Terai G."/>
            <person name="Kusumoto K."/>
            <person name="Arima T."/>
            <person name="Akita O."/>
            <person name="Kashiwagi Y."/>
            <person name="Abe K."/>
            <person name="Gomi K."/>
            <person name="Horiuchi H."/>
            <person name="Kitamoto K."/>
            <person name="Kobayashi T."/>
            <person name="Takeuchi M."/>
            <person name="Denning D.W."/>
            <person name="Galagan J.E."/>
            <person name="Nierman W.C."/>
            <person name="Yu J."/>
            <person name="Archer D.B."/>
            <person name="Bennett J.W."/>
            <person name="Bhatnagar D."/>
            <person name="Cleveland T.E."/>
            <person name="Fedorova N.D."/>
            <person name="Gotoh O."/>
            <person name="Horikawa H."/>
            <person name="Hosoyama A."/>
            <person name="Ichinomiya M."/>
            <person name="Igarashi R."/>
            <person name="Iwashita K."/>
            <person name="Juvvadi P.R."/>
            <person name="Kato M."/>
            <person name="Kato Y."/>
            <person name="Kin T."/>
            <person name="Kokubun A."/>
            <person name="Maeda H."/>
            <person name="Maeyama N."/>
            <person name="Maruyama J."/>
            <person name="Nagasaki H."/>
            <person name="Nakajima T."/>
            <person name="Oda K."/>
            <person name="Okada K."/>
            <person name="Paulsen I."/>
            <person name="Sakamoto K."/>
            <person name="Sawano T."/>
            <person name="Takahashi M."/>
            <person name="Takase K."/>
            <person name="Terabayashi Y."/>
            <person name="Wortman J.R."/>
            <person name="Yamada O."/>
            <person name="Yamagata Y."/>
            <person name="Anazawa H."/>
            <person name="Hata Y."/>
            <person name="Koide Y."/>
            <person name="Komori T."/>
            <person name="Koyama Y."/>
            <person name="Minetoki T."/>
            <person name="Suharnan S."/>
            <person name="Tanaka A."/>
            <person name="Isono K."/>
            <person name="Kuhara S."/>
            <person name="Ogasawara N."/>
            <person name="Kikuchi H."/>
        </authorList>
    </citation>
    <scope>NUCLEOTIDE SEQUENCE [LARGE SCALE GENOMIC DNA]</scope>
    <source>
        <strain>ATCC 42149 / RIB 40</strain>
    </source>
</reference>
<protein>
    <recommendedName>
        <fullName>Endo-beta-1,4-glucanase celB</fullName>
        <shortName>Endoglucanase celB</shortName>
        <ecNumber>3.2.1.4</ecNumber>
    </recommendedName>
    <alternativeName>
        <fullName>Carboxymethylcellulase celB</fullName>
    </alternativeName>
    <alternativeName>
        <fullName>Cellulase B</fullName>
    </alternativeName>
</protein>
<gene>
    <name type="primary">celB</name>
    <name type="ORF">AO090010000314</name>
</gene>
<feature type="signal peptide" evidence="2">
    <location>
        <begin position="1"/>
        <end position="17"/>
    </location>
</feature>
<feature type="chain" id="PRO_0000395157" description="Endo-beta-1,4-glucanase celB">
    <location>
        <begin position="18"/>
        <end position="416"/>
    </location>
</feature>
<feature type="active site" description="Nucleophile" evidence="1">
    <location>
        <position position="214"/>
    </location>
</feature>
<feature type="active site" description="Proton donor" evidence="1">
    <location>
        <position position="219"/>
    </location>
</feature>
<feature type="glycosylation site" description="N-linked (GlcNAc...) asparagine" evidence="2">
    <location>
        <position position="45"/>
    </location>
</feature>
<feature type="glycosylation site" description="N-linked (GlcNAc...) asparagine" evidence="2">
    <location>
        <position position="104"/>
    </location>
</feature>
<feature type="glycosylation site" description="N-linked (GlcNAc...) asparagine" evidence="2">
    <location>
        <position position="117"/>
    </location>
</feature>
<feature type="glycosylation site" description="N-linked (GlcNAc...) asparagine" evidence="2">
    <location>
        <position position="135"/>
    </location>
</feature>
<feature type="glycosylation site" description="N-linked (GlcNAc...) asparagine" evidence="2">
    <location>
        <position position="233"/>
    </location>
</feature>
<feature type="glycosylation site" description="N-linked (GlcNAc...) asparagine" evidence="2">
    <location>
        <position position="278"/>
    </location>
</feature>
<feature type="glycosylation site" description="N-linked (GlcNAc...) asparagine" evidence="2">
    <location>
        <position position="292"/>
    </location>
</feature>
<feature type="glycosylation site" description="N-linked (GlcNAc...) asparagine" evidence="2">
    <location>
        <position position="382"/>
    </location>
</feature>
<feature type="sequence conflict" description="In Ref. 1; BAA22589." evidence="4" ref="1">
    <original>V</original>
    <variation>L</variation>
    <location>
        <position position="48"/>
    </location>
</feature>
<comment type="function">
    <text evidence="3">Has endoglucanase activity on substrates containing beta-1,4 glycosidic bonds, like in carboxymethylcellulose (CMC), hydroxyethylcellulose (HEC) and beta-glucan. Involved in the degradation of complex natural cellulosic substrates.</text>
</comment>
<comment type="catalytic activity">
    <reaction>
        <text>Endohydrolysis of (1-&gt;4)-beta-D-glucosidic linkages in cellulose, lichenin and cereal beta-D-glucans.</text>
        <dbReference type="EC" id="3.2.1.4"/>
    </reaction>
</comment>
<comment type="biophysicochemical properties">
    <phDependence>
        <text evidence="3">Optimum pH is 4.0. Stable between pH 3.0 and 7.0.</text>
    </phDependence>
    <temperatureDependence>
        <text evidence="3">Optimum temperature is 45 degrees Celsius. Stable up to 50 degrees Celsius.</text>
    </temperatureDependence>
</comment>
<comment type="subcellular location">
    <subcellularLocation>
        <location evidence="1">Secreted</location>
    </subcellularLocation>
</comment>
<comment type="similarity">
    <text evidence="4">Belongs to the glycosyl hydrolase 7 (cellulase C) family.</text>
</comment>
<dbReference type="EC" id="3.2.1.4"/>
<dbReference type="EMBL" id="D83732">
    <property type="protein sequence ID" value="BAA22589.1"/>
    <property type="molecule type" value="Genomic_DNA"/>
</dbReference>
<dbReference type="EMBL" id="BA000056">
    <property type="protein sequence ID" value="BAE66197.1"/>
    <property type="molecule type" value="Genomic_DNA"/>
</dbReference>
<dbReference type="RefSeq" id="XP_001827330.1">
    <property type="nucleotide sequence ID" value="XM_001827278.1"/>
</dbReference>
<dbReference type="SMR" id="Q2TX26"/>
<dbReference type="STRING" id="510516.Q2TX26"/>
<dbReference type="CAZy" id="GH7">
    <property type="family name" value="Glycoside Hydrolase Family 7"/>
</dbReference>
<dbReference type="GlyCosmos" id="Q2TX26">
    <property type="glycosylation" value="8 sites, No reported glycans"/>
</dbReference>
<dbReference type="EnsemblFungi" id="BAE66197">
    <property type="protein sequence ID" value="BAE66197"/>
    <property type="gene ID" value="AO090010000314"/>
</dbReference>
<dbReference type="GeneID" id="5999464"/>
<dbReference type="KEGG" id="aor:AO090010000314"/>
<dbReference type="VEuPathDB" id="FungiDB:AO090010000314"/>
<dbReference type="HOGENOM" id="CLU_020817_0_1_1"/>
<dbReference type="OMA" id="FSIWNDN"/>
<dbReference type="OrthoDB" id="124092at5052"/>
<dbReference type="Proteomes" id="UP000006564">
    <property type="component" value="Chromosome 8"/>
</dbReference>
<dbReference type="GO" id="GO:0005576">
    <property type="term" value="C:extracellular region"/>
    <property type="evidence" value="ECO:0007669"/>
    <property type="project" value="UniProtKB-SubCell"/>
</dbReference>
<dbReference type="GO" id="GO:0008810">
    <property type="term" value="F:cellulase activity"/>
    <property type="evidence" value="ECO:0007669"/>
    <property type="project" value="UniProtKB-EC"/>
</dbReference>
<dbReference type="GO" id="GO:0030245">
    <property type="term" value="P:cellulose catabolic process"/>
    <property type="evidence" value="ECO:0007669"/>
    <property type="project" value="UniProtKB-KW"/>
</dbReference>
<dbReference type="GO" id="GO:0009251">
    <property type="term" value="P:glucan catabolic process"/>
    <property type="evidence" value="ECO:0000314"/>
    <property type="project" value="AspGD"/>
</dbReference>
<dbReference type="CDD" id="cd07999">
    <property type="entry name" value="GH7_CBH_EG"/>
    <property type="match status" value="1"/>
</dbReference>
<dbReference type="FunFam" id="2.70.100.10:FF:000001">
    <property type="entry name" value="Glucanase"/>
    <property type="match status" value="1"/>
</dbReference>
<dbReference type="Gene3D" id="2.70.100.10">
    <property type="entry name" value="Glycoside hydrolase, family 7, domain"/>
    <property type="match status" value="1"/>
</dbReference>
<dbReference type="InterPro" id="IPR013320">
    <property type="entry name" value="ConA-like_dom_sf"/>
</dbReference>
<dbReference type="InterPro" id="IPR001722">
    <property type="entry name" value="Glyco_hydro_7"/>
</dbReference>
<dbReference type="InterPro" id="IPR037019">
    <property type="entry name" value="Glyco_hydro_7_sf"/>
</dbReference>
<dbReference type="PANTHER" id="PTHR33753">
    <property type="entry name" value="1,4-BETA-D-GLUCAN CELLOBIOHYDROLASE B"/>
    <property type="match status" value="1"/>
</dbReference>
<dbReference type="PANTHER" id="PTHR33753:SF1">
    <property type="entry name" value="ENDO-BETA-1,4-GLUCANASE CELB"/>
    <property type="match status" value="1"/>
</dbReference>
<dbReference type="Pfam" id="PF00840">
    <property type="entry name" value="Glyco_hydro_7"/>
    <property type="match status" value="1"/>
</dbReference>
<dbReference type="PRINTS" id="PR00734">
    <property type="entry name" value="GLHYDRLASE7"/>
</dbReference>
<dbReference type="SUPFAM" id="SSF49899">
    <property type="entry name" value="Concanavalin A-like lectins/glucanases"/>
    <property type="match status" value="1"/>
</dbReference>
<sequence>MIWTLAPFVALLPLVTAQQVGTTADAHPRLTTYKCTSQNGCTRQNTSVVLDAATHFIHKKGTQTSCTNSNGLDTAICPDKQTCADNCVVDGITDYASYGVQTKNDTLTLQQYLQTGNATKSLSPRVYLLAEDGENYSMLKLLNQEFTFDVDASTLVCGMNGALYLSEMEASGGKSSLNQAGAKYGTGYCDAQCYTTPWINGEGNTESVGSCCQEMDIWEANARATGLTPHPCNTTGLYECSGSGCGDSGVCDKAGCGFNPYGLGAKDYYGYGLKVNTNETFTVVTQFLTNDNTTSGQLSEIRRLYIQNGQVIQNAAVTSGGKTVDSITKDFCSGEGSAFNRLGGLEEMGHALGRGMVLALSIWNDAGSFMQWLDGGSAGPCNATEGNPALIEKLYPDTHVKFSKIRWGDIGSTYRH</sequence>
<name>CELB_ASPOR</name>
<keyword id="KW-0119">Carbohydrate metabolism</keyword>
<keyword id="KW-0136">Cellulose degradation</keyword>
<keyword id="KW-0325">Glycoprotein</keyword>
<keyword id="KW-0326">Glycosidase</keyword>
<keyword id="KW-0378">Hydrolase</keyword>
<keyword id="KW-0624">Polysaccharide degradation</keyword>
<keyword id="KW-1185">Reference proteome</keyword>
<keyword id="KW-0964">Secreted</keyword>
<keyword id="KW-0732">Signal</keyword>
<organism>
    <name type="scientific">Aspergillus oryzae (strain ATCC 42149 / RIB 40)</name>
    <name type="common">Yellow koji mold</name>
    <dbReference type="NCBI Taxonomy" id="510516"/>
    <lineage>
        <taxon>Eukaryota</taxon>
        <taxon>Fungi</taxon>
        <taxon>Dikarya</taxon>
        <taxon>Ascomycota</taxon>
        <taxon>Pezizomycotina</taxon>
        <taxon>Eurotiomycetes</taxon>
        <taxon>Eurotiomycetidae</taxon>
        <taxon>Eurotiales</taxon>
        <taxon>Aspergillaceae</taxon>
        <taxon>Aspergillus</taxon>
        <taxon>Aspergillus subgen. Circumdati</taxon>
    </lineage>
</organism>
<evidence type="ECO:0000250" key="1"/>
<evidence type="ECO:0000255" key="2"/>
<evidence type="ECO:0000269" key="3">
    <source>
    </source>
</evidence>
<evidence type="ECO:0000305" key="4"/>
<proteinExistence type="evidence at protein level"/>
<accession>Q2TX26</accession>
<accession>O13455</accession>